<name>YAVA_SCHPO</name>
<dbReference type="EMBL" id="CU329670">
    <property type="protein sequence ID" value="CAC34963.1"/>
    <property type="molecule type" value="Genomic_DNA"/>
</dbReference>
<dbReference type="RefSeq" id="NP_594534.1">
    <property type="nucleotide sequence ID" value="NM_001019963.2"/>
</dbReference>
<dbReference type="STRING" id="284812.Q9C112"/>
<dbReference type="PaxDb" id="4896-SPAC27F1.10.1"/>
<dbReference type="EnsemblFungi" id="SPAC27F1.10.1">
    <property type="protein sequence ID" value="SPAC27F1.10.1:pep"/>
    <property type="gene ID" value="SPAC27F1.10"/>
</dbReference>
<dbReference type="KEGG" id="spo:2542562"/>
<dbReference type="PomBase" id="SPAC27F1.10"/>
<dbReference type="VEuPathDB" id="FungiDB:SPAC27F1.10"/>
<dbReference type="HOGENOM" id="CLU_2293313_0_0_1"/>
<dbReference type="InParanoid" id="Q9C112"/>
<dbReference type="PRO" id="PR:Q9C112"/>
<dbReference type="Proteomes" id="UP000002485">
    <property type="component" value="Chromosome I"/>
</dbReference>
<dbReference type="GO" id="GO:0005829">
    <property type="term" value="C:cytosol"/>
    <property type="evidence" value="ECO:0007005"/>
    <property type="project" value="PomBase"/>
</dbReference>
<dbReference type="GO" id="GO:0031965">
    <property type="term" value="C:nuclear membrane"/>
    <property type="evidence" value="ECO:0007669"/>
    <property type="project" value="UniProtKB-SubCell"/>
</dbReference>
<dbReference type="GO" id="GO:0005634">
    <property type="term" value="C:nucleus"/>
    <property type="evidence" value="ECO:0007005"/>
    <property type="project" value="PomBase"/>
</dbReference>
<comment type="subcellular location">
    <subcellularLocation>
        <location>Cytoplasm</location>
    </subcellularLocation>
    <subcellularLocation>
        <location evidence="2">Nucleus membrane</location>
        <topology evidence="2">Multi-pass membrane protein</topology>
    </subcellularLocation>
</comment>
<feature type="signal peptide" evidence="1">
    <location>
        <begin position="1"/>
        <end position="27"/>
    </location>
</feature>
<feature type="chain" id="PRO_0000303926" description="Uncharacterized membrane protein C27F1.10">
    <location>
        <begin position="28"/>
        <end position="101"/>
    </location>
</feature>
<feature type="transmembrane region" description="Helical" evidence="1">
    <location>
        <begin position="42"/>
        <end position="64"/>
    </location>
</feature>
<feature type="transmembrane region" description="Helical" evidence="1">
    <location>
        <begin position="79"/>
        <end position="98"/>
    </location>
</feature>
<sequence length="101" mass="11764">MQLTGSIYPWFTAYALLKSTLMELINSFIPYKSQTGKAPKCLVPYWLSIRLSLLYFKLTEAISFTEKCEKYNISLFDSTFVFGYIVNCFFIIHLNTFLTSQ</sequence>
<reference key="1">
    <citation type="journal article" date="2002" name="Nature">
        <title>The genome sequence of Schizosaccharomyces pombe.</title>
        <authorList>
            <person name="Wood V."/>
            <person name="Gwilliam R."/>
            <person name="Rajandream M.A."/>
            <person name="Lyne M.H."/>
            <person name="Lyne R."/>
            <person name="Stewart A."/>
            <person name="Sgouros J.G."/>
            <person name="Peat N."/>
            <person name="Hayles J."/>
            <person name="Baker S.G."/>
            <person name="Basham D."/>
            <person name="Bowman S."/>
            <person name="Brooks K."/>
            <person name="Brown D."/>
            <person name="Brown S."/>
            <person name="Chillingworth T."/>
            <person name="Churcher C.M."/>
            <person name="Collins M."/>
            <person name="Connor R."/>
            <person name="Cronin A."/>
            <person name="Davis P."/>
            <person name="Feltwell T."/>
            <person name="Fraser A."/>
            <person name="Gentles S."/>
            <person name="Goble A."/>
            <person name="Hamlin N."/>
            <person name="Harris D.E."/>
            <person name="Hidalgo J."/>
            <person name="Hodgson G."/>
            <person name="Holroyd S."/>
            <person name="Hornsby T."/>
            <person name="Howarth S."/>
            <person name="Huckle E.J."/>
            <person name="Hunt S."/>
            <person name="Jagels K."/>
            <person name="James K.D."/>
            <person name="Jones L."/>
            <person name="Jones M."/>
            <person name="Leather S."/>
            <person name="McDonald S."/>
            <person name="McLean J."/>
            <person name="Mooney P."/>
            <person name="Moule S."/>
            <person name="Mungall K.L."/>
            <person name="Murphy L.D."/>
            <person name="Niblett D."/>
            <person name="Odell C."/>
            <person name="Oliver K."/>
            <person name="O'Neil S."/>
            <person name="Pearson D."/>
            <person name="Quail M.A."/>
            <person name="Rabbinowitsch E."/>
            <person name="Rutherford K.M."/>
            <person name="Rutter S."/>
            <person name="Saunders D."/>
            <person name="Seeger K."/>
            <person name="Sharp S."/>
            <person name="Skelton J."/>
            <person name="Simmonds M.N."/>
            <person name="Squares R."/>
            <person name="Squares S."/>
            <person name="Stevens K."/>
            <person name="Taylor K."/>
            <person name="Taylor R.G."/>
            <person name="Tivey A."/>
            <person name="Walsh S.V."/>
            <person name="Warren T."/>
            <person name="Whitehead S."/>
            <person name="Woodward J.R."/>
            <person name="Volckaert G."/>
            <person name="Aert R."/>
            <person name="Robben J."/>
            <person name="Grymonprez B."/>
            <person name="Weltjens I."/>
            <person name="Vanstreels E."/>
            <person name="Rieger M."/>
            <person name="Schaefer M."/>
            <person name="Mueller-Auer S."/>
            <person name="Gabel C."/>
            <person name="Fuchs M."/>
            <person name="Duesterhoeft A."/>
            <person name="Fritzc C."/>
            <person name="Holzer E."/>
            <person name="Moestl D."/>
            <person name="Hilbert H."/>
            <person name="Borzym K."/>
            <person name="Langer I."/>
            <person name="Beck A."/>
            <person name="Lehrach H."/>
            <person name="Reinhardt R."/>
            <person name="Pohl T.M."/>
            <person name="Eger P."/>
            <person name="Zimmermann W."/>
            <person name="Wedler H."/>
            <person name="Wambutt R."/>
            <person name="Purnelle B."/>
            <person name="Goffeau A."/>
            <person name="Cadieu E."/>
            <person name="Dreano S."/>
            <person name="Gloux S."/>
            <person name="Lelaure V."/>
            <person name="Mottier S."/>
            <person name="Galibert F."/>
            <person name="Aves S.J."/>
            <person name="Xiang Z."/>
            <person name="Hunt C."/>
            <person name="Moore K."/>
            <person name="Hurst S.M."/>
            <person name="Lucas M."/>
            <person name="Rochet M."/>
            <person name="Gaillardin C."/>
            <person name="Tallada V.A."/>
            <person name="Garzon A."/>
            <person name="Thode G."/>
            <person name="Daga R.R."/>
            <person name="Cruzado L."/>
            <person name="Jimenez J."/>
            <person name="Sanchez M."/>
            <person name="del Rey F."/>
            <person name="Benito J."/>
            <person name="Dominguez A."/>
            <person name="Revuelta J.L."/>
            <person name="Moreno S."/>
            <person name="Armstrong J."/>
            <person name="Forsburg S.L."/>
            <person name="Cerutti L."/>
            <person name="Lowe T."/>
            <person name="McCombie W.R."/>
            <person name="Paulsen I."/>
            <person name="Potashkin J."/>
            <person name="Shpakovski G.V."/>
            <person name="Ussery D."/>
            <person name="Barrell B.G."/>
            <person name="Nurse P."/>
        </authorList>
    </citation>
    <scope>NUCLEOTIDE SEQUENCE [LARGE SCALE GENOMIC DNA]</scope>
    <source>
        <strain>972 / ATCC 24843</strain>
    </source>
</reference>
<keyword id="KW-0963">Cytoplasm</keyword>
<keyword id="KW-0472">Membrane</keyword>
<keyword id="KW-0539">Nucleus</keyword>
<keyword id="KW-1185">Reference proteome</keyword>
<keyword id="KW-0732">Signal</keyword>
<keyword id="KW-0812">Transmembrane</keyword>
<keyword id="KW-1133">Transmembrane helix</keyword>
<protein>
    <recommendedName>
        <fullName>Uncharacterized membrane protein C27F1.10</fullName>
    </recommendedName>
</protein>
<organism>
    <name type="scientific">Schizosaccharomyces pombe (strain 972 / ATCC 24843)</name>
    <name type="common">Fission yeast</name>
    <dbReference type="NCBI Taxonomy" id="284812"/>
    <lineage>
        <taxon>Eukaryota</taxon>
        <taxon>Fungi</taxon>
        <taxon>Dikarya</taxon>
        <taxon>Ascomycota</taxon>
        <taxon>Taphrinomycotina</taxon>
        <taxon>Schizosaccharomycetes</taxon>
        <taxon>Schizosaccharomycetales</taxon>
        <taxon>Schizosaccharomycetaceae</taxon>
        <taxon>Schizosaccharomyces</taxon>
    </lineage>
</organism>
<evidence type="ECO:0000255" key="1"/>
<evidence type="ECO:0000305" key="2"/>
<accession>Q9C112</accession>
<gene>
    <name type="ORF">SPAC27F1.10</name>
</gene>
<proteinExistence type="inferred from homology"/>